<dbReference type="EMBL" id="AM040264">
    <property type="protein sequence ID" value="CAJ10534.1"/>
    <property type="molecule type" value="Genomic_DNA"/>
</dbReference>
<dbReference type="RefSeq" id="WP_002969060.1">
    <property type="nucleotide sequence ID" value="NZ_KN046823.1"/>
</dbReference>
<dbReference type="SMR" id="Q2YMS6"/>
<dbReference type="STRING" id="359391.BAB1_0578"/>
<dbReference type="GeneID" id="93017025"/>
<dbReference type="KEGG" id="bmf:BAB1_0578"/>
<dbReference type="PATRIC" id="fig|359391.11.peg.2888"/>
<dbReference type="HOGENOM" id="CLU_069356_15_4_5"/>
<dbReference type="UniPathway" id="UPA00529"/>
<dbReference type="Proteomes" id="UP000002719">
    <property type="component" value="Chromosome I"/>
</dbReference>
<dbReference type="GO" id="GO:0003700">
    <property type="term" value="F:DNA-binding transcription factor activity"/>
    <property type="evidence" value="ECO:0007669"/>
    <property type="project" value="UniProtKB-UniRule"/>
</dbReference>
<dbReference type="GO" id="GO:0000976">
    <property type="term" value="F:transcription cis-regulatory region binding"/>
    <property type="evidence" value="ECO:0007669"/>
    <property type="project" value="TreeGrafter"/>
</dbReference>
<dbReference type="GO" id="GO:0019285">
    <property type="term" value="P:glycine betaine biosynthetic process from choline"/>
    <property type="evidence" value="ECO:0007669"/>
    <property type="project" value="UniProtKB-UniRule"/>
</dbReference>
<dbReference type="GO" id="GO:0045892">
    <property type="term" value="P:negative regulation of DNA-templated transcription"/>
    <property type="evidence" value="ECO:0007669"/>
    <property type="project" value="UniProtKB-UniRule"/>
</dbReference>
<dbReference type="Gene3D" id="1.10.357.10">
    <property type="entry name" value="Tetracycline Repressor, domain 2"/>
    <property type="match status" value="1"/>
</dbReference>
<dbReference type="HAMAP" id="MF_00768">
    <property type="entry name" value="HTH_type_BetI"/>
    <property type="match status" value="1"/>
</dbReference>
<dbReference type="InterPro" id="IPR039538">
    <property type="entry name" value="BetI_C"/>
</dbReference>
<dbReference type="InterPro" id="IPR023772">
    <property type="entry name" value="DNA-bd_HTH_TetR-type_CS"/>
</dbReference>
<dbReference type="InterPro" id="IPR009057">
    <property type="entry name" value="Homeodomain-like_sf"/>
</dbReference>
<dbReference type="InterPro" id="IPR050109">
    <property type="entry name" value="HTH-type_TetR-like_transc_reg"/>
</dbReference>
<dbReference type="InterPro" id="IPR001647">
    <property type="entry name" value="HTH_TetR"/>
</dbReference>
<dbReference type="InterPro" id="IPR036271">
    <property type="entry name" value="Tet_transcr_reg_TetR-rel_C_sf"/>
</dbReference>
<dbReference type="InterPro" id="IPR017757">
    <property type="entry name" value="Tscrpt_rep_BetI"/>
</dbReference>
<dbReference type="NCBIfam" id="TIGR03384">
    <property type="entry name" value="betaine_BetI"/>
    <property type="match status" value="1"/>
</dbReference>
<dbReference type="NCBIfam" id="NF001978">
    <property type="entry name" value="PRK00767.1"/>
    <property type="match status" value="1"/>
</dbReference>
<dbReference type="PANTHER" id="PTHR30055:SF234">
    <property type="entry name" value="HTH-TYPE TRANSCRIPTIONAL REGULATOR BETI"/>
    <property type="match status" value="1"/>
</dbReference>
<dbReference type="PANTHER" id="PTHR30055">
    <property type="entry name" value="HTH-TYPE TRANSCRIPTIONAL REGULATOR RUTR"/>
    <property type="match status" value="1"/>
</dbReference>
<dbReference type="Pfam" id="PF13977">
    <property type="entry name" value="TetR_C_6"/>
    <property type="match status" value="1"/>
</dbReference>
<dbReference type="Pfam" id="PF00440">
    <property type="entry name" value="TetR_N"/>
    <property type="match status" value="1"/>
</dbReference>
<dbReference type="PRINTS" id="PR00455">
    <property type="entry name" value="HTHTETR"/>
</dbReference>
<dbReference type="SUPFAM" id="SSF46689">
    <property type="entry name" value="Homeodomain-like"/>
    <property type="match status" value="1"/>
</dbReference>
<dbReference type="SUPFAM" id="SSF48498">
    <property type="entry name" value="Tetracyclin repressor-like, C-terminal domain"/>
    <property type="match status" value="1"/>
</dbReference>
<dbReference type="PROSITE" id="PS01081">
    <property type="entry name" value="HTH_TETR_1"/>
    <property type="match status" value="1"/>
</dbReference>
<dbReference type="PROSITE" id="PS50977">
    <property type="entry name" value="HTH_TETR_2"/>
    <property type="match status" value="1"/>
</dbReference>
<comment type="function">
    <text evidence="1">Repressor involved in the biosynthesis of the osmoprotectant glycine betaine. It represses transcription of the choline transporter BetT and the genes of BetAB involved in the synthesis of glycine betaine (By similarity).</text>
</comment>
<comment type="pathway">
    <text>Amine and polyamine biosynthesis; betaine biosynthesis via choline pathway [regulation].</text>
</comment>
<accession>Q2YMS6</accession>
<evidence type="ECO:0000250" key="1"/>
<evidence type="ECO:0000255" key="2">
    <source>
        <dbReference type="HAMAP-Rule" id="MF_00768"/>
    </source>
</evidence>
<organism>
    <name type="scientific">Brucella abortus (strain 2308)</name>
    <dbReference type="NCBI Taxonomy" id="359391"/>
    <lineage>
        <taxon>Bacteria</taxon>
        <taxon>Pseudomonadati</taxon>
        <taxon>Pseudomonadota</taxon>
        <taxon>Alphaproteobacteria</taxon>
        <taxon>Hyphomicrobiales</taxon>
        <taxon>Brucellaceae</taxon>
        <taxon>Brucella/Ochrobactrum group</taxon>
        <taxon>Brucella</taxon>
    </lineage>
</organism>
<sequence>MPKIGMEPLRRRELIDAAIRTIGQRGSLDVTVAQIAHEAGVSPALAHHYFGGKDKLILATMRHLLRELGRDLNVAIKQANTPHERIAAIIAVNFSATQFAQETIAAWLTFYVHAQQSDDIKRLLRIYARRLHSNLVFALEQLTSRARANRIAEGAGAMIDGLYIRHALGADAPDAASAIALVEDYIAIQLSGQPSAEN</sequence>
<feature type="chain" id="PRO_0000257727" description="HTH-type transcriptional regulator BetI">
    <location>
        <begin position="1"/>
        <end position="198"/>
    </location>
</feature>
<feature type="domain" description="HTH tetR-type" evidence="2">
    <location>
        <begin position="8"/>
        <end position="68"/>
    </location>
</feature>
<feature type="DNA-binding region" description="H-T-H motif" evidence="2">
    <location>
        <begin position="31"/>
        <end position="50"/>
    </location>
</feature>
<protein>
    <recommendedName>
        <fullName evidence="2">HTH-type transcriptional regulator BetI</fullName>
    </recommendedName>
</protein>
<keyword id="KW-0238">DNA-binding</keyword>
<keyword id="KW-1185">Reference proteome</keyword>
<keyword id="KW-0678">Repressor</keyword>
<keyword id="KW-0804">Transcription</keyword>
<keyword id="KW-0805">Transcription regulation</keyword>
<proteinExistence type="inferred from homology"/>
<gene>
    <name evidence="2" type="primary">betI</name>
    <name type="ordered locus">BAB1_0578</name>
</gene>
<name>BETI_BRUA2</name>
<reference key="1">
    <citation type="journal article" date="2005" name="Infect. Immun.">
        <title>Whole-genome analyses of speciation events in pathogenic Brucellae.</title>
        <authorList>
            <person name="Chain P.S."/>
            <person name="Comerci D.J."/>
            <person name="Tolmasky M.E."/>
            <person name="Larimer F.W."/>
            <person name="Malfatti S.A."/>
            <person name="Vergez L.M."/>
            <person name="Aguero F."/>
            <person name="Land M.L."/>
            <person name="Ugalde R.A."/>
            <person name="Garcia E."/>
        </authorList>
    </citation>
    <scope>NUCLEOTIDE SEQUENCE [LARGE SCALE GENOMIC DNA]</scope>
    <source>
        <strain>2308</strain>
    </source>
</reference>